<sequence length="95" mass="11051">MSTHLCAIYKSPKREGMFLYVAKRDQFDSVPEALRQMFGKPQFVMLFNLNGEKQLKRSKNEEVLQAIQTQGFFLQMPPPPENLLKTFLEQNRGEA</sequence>
<protein>
    <recommendedName>
        <fullName evidence="1">YcgL domain-containing protein APJL_0712</fullName>
    </recommendedName>
</protein>
<proteinExistence type="inferred from homology"/>
<feature type="chain" id="PRO_0000375272" description="YcgL domain-containing protein APJL_0712">
    <location>
        <begin position="1"/>
        <end position="95"/>
    </location>
</feature>
<feature type="domain" description="YcgL" evidence="1">
    <location>
        <begin position="4"/>
        <end position="88"/>
    </location>
</feature>
<name>Y712_ACTPJ</name>
<dbReference type="EMBL" id="CP000687">
    <property type="protein sequence ID" value="ABY69277.1"/>
    <property type="molecule type" value="Genomic_DNA"/>
</dbReference>
<dbReference type="RefSeq" id="WP_012262931.1">
    <property type="nucleotide sequence ID" value="NC_010278.1"/>
</dbReference>
<dbReference type="SMR" id="B0BNZ2"/>
<dbReference type="KEGG" id="apj:APJL_0712"/>
<dbReference type="HOGENOM" id="CLU_155118_1_0_6"/>
<dbReference type="Proteomes" id="UP000008547">
    <property type="component" value="Chromosome"/>
</dbReference>
<dbReference type="Gene3D" id="3.10.510.20">
    <property type="entry name" value="YcgL domain"/>
    <property type="match status" value="1"/>
</dbReference>
<dbReference type="HAMAP" id="MF_01866">
    <property type="entry name" value="UPF0745"/>
    <property type="match status" value="1"/>
</dbReference>
<dbReference type="InterPro" id="IPR038068">
    <property type="entry name" value="YcgL-like_sf"/>
</dbReference>
<dbReference type="InterPro" id="IPR027354">
    <property type="entry name" value="YcgL_dom"/>
</dbReference>
<dbReference type="PANTHER" id="PTHR38109">
    <property type="entry name" value="PROTEIN YCGL"/>
    <property type="match status" value="1"/>
</dbReference>
<dbReference type="PANTHER" id="PTHR38109:SF1">
    <property type="entry name" value="PROTEIN YCGL"/>
    <property type="match status" value="1"/>
</dbReference>
<dbReference type="Pfam" id="PF05166">
    <property type="entry name" value="YcgL"/>
    <property type="match status" value="1"/>
</dbReference>
<dbReference type="SUPFAM" id="SSF160191">
    <property type="entry name" value="YcgL-like"/>
    <property type="match status" value="1"/>
</dbReference>
<dbReference type="PROSITE" id="PS51648">
    <property type="entry name" value="YCGL"/>
    <property type="match status" value="1"/>
</dbReference>
<accession>B0BNZ2</accession>
<reference key="1">
    <citation type="journal article" date="2008" name="PLoS ONE">
        <title>Genome biology of Actinobacillus pleuropneumoniae JL03, an isolate of serotype 3 prevalent in China.</title>
        <authorList>
            <person name="Xu Z."/>
            <person name="Zhou Y."/>
            <person name="Li L."/>
            <person name="Zhou R."/>
            <person name="Xiao S."/>
            <person name="Wan Y."/>
            <person name="Zhang S."/>
            <person name="Wang K."/>
            <person name="Li W."/>
            <person name="Li L."/>
            <person name="Jin H."/>
            <person name="Kang M."/>
            <person name="Dalai B."/>
            <person name="Li T."/>
            <person name="Liu L."/>
            <person name="Cheng Y."/>
            <person name="Zhang L."/>
            <person name="Xu T."/>
            <person name="Zheng H."/>
            <person name="Pu S."/>
            <person name="Wang B."/>
            <person name="Gu W."/>
            <person name="Zhang X.L."/>
            <person name="Zhu G.-F."/>
            <person name="Wang S."/>
            <person name="Zhao G.-P."/>
            <person name="Chen H."/>
        </authorList>
    </citation>
    <scope>NUCLEOTIDE SEQUENCE [LARGE SCALE GENOMIC DNA]</scope>
    <source>
        <strain>JL03</strain>
    </source>
</reference>
<gene>
    <name type="ordered locus">APJL_0712</name>
</gene>
<evidence type="ECO:0000255" key="1">
    <source>
        <dbReference type="HAMAP-Rule" id="MF_01866"/>
    </source>
</evidence>
<organism>
    <name type="scientific">Actinobacillus pleuropneumoniae serotype 3 (strain JL03)</name>
    <dbReference type="NCBI Taxonomy" id="434271"/>
    <lineage>
        <taxon>Bacteria</taxon>
        <taxon>Pseudomonadati</taxon>
        <taxon>Pseudomonadota</taxon>
        <taxon>Gammaproteobacteria</taxon>
        <taxon>Pasteurellales</taxon>
        <taxon>Pasteurellaceae</taxon>
        <taxon>Actinobacillus</taxon>
    </lineage>
</organism>